<feature type="chain" id="PRO_1000015147" description="Cell division protein ZipA">
    <location>
        <begin position="1"/>
        <end position="289"/>
    </location>
</feature>
<feature type="topological domain" description="Periplasmic" evidence="1">
    <location>
        <position position="1"/>
    </location>
</feature>
<feature type="transmembrane region" description="Helical" evidence="1">
    <location>
        <begin position="2"/>
        <end position="22"/>
    </location>
</feature>
<feature type="topological domain" description="Cytoplasmic" evidence="1">
    <location>
        <begin position="23"/>
        <end position="289"/>
    </location>
</feature>
<feature type="region of interest" description="Disordered" evidence="2">
    <location>
        <begin position="65"/>
        <end position="141"/>
    </location>
</feature>
<feature type="compositionally biased region" description="Basic and acidic residues" evidence="2">
    <location>
        <begin position="81"/>
        <end position="99"/>
    </location>
</feature>
<feature type="compositionally biased region" description="Acidic residues" evidence="2">
    <location>
        <begin position="100"/>
        <end position="114"/>
    </location>
</feature>
<keyword id="KW-0131">Cell cycle</keyword>
<keyword id="KW-0132">Cell division</keyword>
<keyword id="KW-0997">Cell inner membrane</keyword>
<keyword id="KW-1003">Cell membrane</keyword>
<keyword id="KW-0472">Membrane</keyword>
<keyword id="KW-0812">Transmembrane</keyword>
<keyword id="KW-1133">Transmembrane helix</keyword>
<sequence length="289" mass="32263">MDIGLREWLIVIGLIVIAGILFDGWRRMRGGKGKLKFKLDRSFANLPDDDGDSAELLGPARVVEHREPSFDEQDLPSVSARETKERKGGKRQEEPRQGDLDLDEGLALEADPSDAAEPVEPRKGKSKGRKEKEREKAPAVAAEPAPVDEVLIINVIARDESGFKGPALLQNILESGLRFGDMDIFHRHESMAGNGEILFSMANAVKPGTFDLDDIDNFSTRAVSFFLGLPGPRHPKQAFDVMVAAARKLAHELNGELKDEQRSVLTAQTIEHYRQRIIDHERRSLMQKR</sequence>
<accession>Q02K11</accession>
<gene>
    <name evidence="1" type="primary">zipA</name>
    <name type="ordered locus">PA14_44670</name>
</gene>
<organism>
    <name type="scientific">Pseudomonas aeruginosa (strain UCBPP-PA14)</name>
    <dbReference type="NCBI Taxonomy" id="208963"/>
    <lineage>
        <taxon>Bacteria</taxon>
        <taxon>Pseudomonadati</taxon>
        <taxon>Pseudomonadota</taxon>
        <taxon>Gammaproteobacteria</taxon>
        <taxon>Pseudomonadales</taxon>
        <taxon>Pseudomonadaceae</taxon>
        <taxon>Pseudomonas</taxon>
    </lineage>
</organism>
<comment type="function">
    <text evidence="1">Essential cell division protein that stabilizes the FtsZ protofilaments by cross-linking them and that serves as a cytoplasmic membrane anchor for the Z ring. Also required for the recruitment to the septal ring of downstream cell division proteins.</text>
</comment>
<comment type="subunit">
    <text evidence="1">Interacts with FtsZ via their C-terminal domains.</text>
</comment>
<comment type="subcellular location">
    <subcellularLocation>
        <location evidence="1">Cell inner membrane</location>
        <topology evidence="1">Single-pass type I membrane protein</topology>
    </subcellularLocation>
    <text evidence="1">Localizes to the Z ring in an FtsZ-dependent manner.</text>
</comment>
<comment type="similarity">
    <text evidence="1">Belongs to the ZipA family.</text>
</comment>
<name>ZIPA_PSEAB</name>
<dbReference type="EMBL" id="CP000438">
    <property type="protein sequence ID" value="ABJ10708.1"/>
    <property type="molecule type" value="Genomic_DNA"/>
</dbReference>
<dbReference type="RefSeq" id="WP_003110778.1">
    <property type="nucleotide sequence ID" value="NZ_CP034244.1"/>
</dbReference>
<dbReference type="SMR" id="Q02K11"/>
<dbReference type="KEGG" id="pau:PA14_44670"/>
<dbReference type="PseudoCAP" id="PA14_44670"/>
<dbReference type="HOGENOM" id="CLU_030174_0_1_6"/>
<dbReference type="BioCyc" id="PAER208963:G1G74-3754-MONOMER"/>
<dbReference type="Proteomes" id="UP000000653">
    <property type="component" value="Chromosome"/>
</dbReference>
<dbReference type="GO" id="GO:0032153">
    <property type="term" value="C:cell division site"/>
    <property type="evidence" value="ECO:0007669"/>
    <property type="project" value="UniProtKB-UniRule"/>
</dbReference>
<dbReference type="GO" id="GO:0005886">
    <property type="term" value="C:plasma membrane"/>
    <property type="evidence" value="ECO:0007669"/>
    <property type="project" value="UniProtKB-SubCell"/>
</dbReference>
<dbReference type="GO" id="GO:0000917">
    <property type="term" value="P:division septum assembly"/>
    <property type="evidence" value="ECO:0007669"/>
    <property type="project" value="TreeGrafter"/>
</dbReference>
<dbReference type="GO" id="GO:0043093">
    <property type="term" value="P:FtsZ-dependent cytokinesis"/>
    <property type="evidence" value="ECO:0007669"/>
    <property type="project" value="UniProtKB-UniRule"/>
</dbReference>
<dbReference type="CDD" id="cd00231">
    <property type="entry name" value="ZipA"/>
    <property type="match status" value="1"/>
</dbReference>
<dbReference type="FunFam" id="3.30.1400.10:FF:000002">
    <property type="entry name" value="Cell division protein ZipA"/>
    <property type="match status" value="1"/>
</dbReference>
<dbReference type="Gene3D" id="3.30.1400.10">
    <property type="entry name" value="ZipA, C-terminal FtsZ-binding domain"/>
    <property type="match status" value="1"/>
</dbReference>
<dbReference type="HAMAP" id="MF_00509">
    <property type="entry name" value="ZipA"/>
    <property type="match status" value="1"/>
</dbReference>
<dbReference type="InterPro" id="IPR011919">
    <property type="entry name" value="Cell_div_ZipA"/>
</dbReference>
<dbReference type="InterPro" id="IPR007449">
    <property type="entry name" value="ZipA_FtsZ-bd_C"/>
</dbReference>
<dbReference type="InterPro" id="IPR036765">
    <property type="entry name" value="ZipA_FtsZ-bd_C_sf"/>
</dbReference>
<dbReference type="NCBIfam" id="TIGR02205">
    <property type="entry name" value="septum_zipA"/>
    <property type="match status" value="1"/>
</dbReference>
<dbReference type="PANTHER" id="PTHR38685">
    <property type="entry name" value="CELL DIVISION PROTEIN ZIPA"/>
    <property type="match status" value="1"/>
</dbReference>
<dbReference type="PANTHER" id="PTHR38685:SF1">
    <property type="entry name" value="CELL DIVISION PROTEIN ZIPA"/>
    <property type="match status" value="1"/>
</dbReference>
<dbReference type="Pfam" id="PF04354">
    <property type="entry name" value="ZipA_C"/>
    <property type="match status" value="1"/>
</dbReference>
<dbReference type="SMART" id="SM00771">
    <property type="entry name" value="ZipA_C"/>
    <property type="match status" value="1"/>
</dbReference>
<dbReference type="SUPFAM" id="SSF64383">
    <property type="entry name" value="Cell-division protein ZipA, C-terminal domain"/>
    <property type="match status" value="1"/>
</dbReference>
<proteinExistence type="inferred from homology"/>
<protein>
    <recommendedName>
        <fullName evidence="1">Cell division protein ZipA</fullName>
    </recommendedName>
</protein>
<evidence type="ECO:0000255" key="1">
    <source>
        <dbReference type="HAMAP-Rule" id="MF_00509"/>
    </source>
</evidence>
<evidence type="ECO:0000256" key="2">
    <source>
        <dbReference type="SAM" id="MobiDB-lite"/>
    </source>
</evidence>
<reference key="1">
    <citation type="journal article" date="2006" name="Genome Biol.">
        <title>Genomic analysis reveals that Pseudomonas aeruginosa virulence is combinatorial.</title>
        <authorList>
            <person name="Lee D.G."/>
            <person name="Urbach J.M."/>
            <person name="Wu G."/>
            <person name="Liberati N.T."/>
            <person name="Feinbaum R.L."/>
            <person name="Miyata S."/>
            <person name="Diggins L.T."/>
            <person name="He J."/>
            <person name="Saucier M."/>
            <person name="Deziel E."/>
            <person name="Friedman L."/>
            <person name="Li L."/>
            <person name="Grills G."/>
            <person name="Montgomery K."/>
            <person name="Kucherlapati R."/>
            <person name="Rahme L.G."/>
            <person name="Ausubel F.M."/>
        </authorList>
    </citation>
    <scope>NUCLEOTIDE SEQUENCE [LARGE SCALE GENOMIC DNA]</scope>
    <source>
        <strain>UCBPP-PA14</strain>
    </source>
</reference>